<gene>
    <name evidence="1" type="primary">atpE</name>
    <name type="ordered locus">A1S_0150</name>
</gene>
<proteinExistence type="evidence at protein level"/>
<name>ATPL_ACIBT</name>
<feature type="chain" id="PRO_1000184305" description="ATP synthase subunit c">
    <location>
        <begin position="1"/>
        <end position="81"/>
    </location>
</feature>
<feature type="transmembrane region" description="Helical" evidence="1">
    <location>
        <begin position="7"/>
        <end position="27"/>
    </location>
</feature>
<feature type="transmembrane region" description="Helical" evidence="1">
    <location>
        <begin position="55"/>
        <end position="75"/>
    </location>
</feature>
<feature type="site" description="Reversibly protonated during proton transport" evidence="1">
    <location>
        <position position="60"/>
    </location>
</feature>
<feature type="helix" evidence="2">
    <location>
        <begin position="3"/>
        <end position="40"/>
    </location>
</feature>
<feature type="helix" evidence="2">
    <location>
        <begin position="42"/>
        <end position="44"/>
    </location>
</feature>
<feature type="helix" evidence="2">
    <location>
        <begin position="45"/>
        <end position="59"/>
    </location>
</feature>
<feature type="helix" evidence="2">
    <location>
        <begin position="61"/>
        <end position="75"/>
    </location>
</feature>
<protein>
    <recommendedName>
        <fullName evidence="1">ATP synthase subunit c</fullName>
    </recommendedName>
    <alternativeName>
        <fullName evidence="1">ATP synthase F(0) sector subunit c</fullName>
    </alternativeName>
    <alternativeName>
        <fullName evidence="1">F-type ATPase subunit c</fullName>
        <shortName evidence="1">F-ATPase subunit c</shortName>
    </alternativeName>
    <alternativeName>
        <fullName evidence="1">Lipid-binding protein</fullName>
    </alternativeName>
</protein>
<reference key="1">
    <citation type="journal article" date="2007" name="Genes Dev.">
        <title>New insights into Acinetobacter baumannii pathogenesis revealed by high-density pyrosequencing and transposon mutagenesis.</title>
        <authorList>
            <person name="Smith M.G."/>
            <person name="Gianoulis T.A."/>
            <person name="Pukatzki S."/>
            <person name="Mekalanos J.J."/>
            <person name="Ornston L.N."/>
            <person name="Gerstein M."/>
            <person name="Snyder M."/>
        </authorList>
    </citation>
    <scope>NUCLEOTIDE SEQUENCE [LARGE SCALE GENOMIC DNA]</scope>
    <source>
        <strain>ATCC 17978 / DSM 105126 / CIP 53.77 / LMG 1025 / NCDC KC755 / 5377</strain>
    </source>
</reference>
<comment type="function">
    <text evidence="1">F(1)F(0) ATP synthase produces ATP from ADP in the presence of a proton or sodium gradient. F-type ATPases consist of two structural domains, F(1) containing the extramembraneous catalytic core and F(0) containing the membrane proton channel, linked together by a central stalk and a peripheral stalk. During catalysis, ATP synthesis in the catalytic domain of F(1) is coupled via a rotary mechanism of the central stalk subunits to proton translocation.</text>
</comment>
<comment type="function">
    <text evidence="1">Key component of the F(0) channel; it plays a direct role in translocation across the membrane. A homomeric c-ring of between 10-14 subunits forms the central stalk rotor element with the F(1) delta and epsilon subunits.</text>
</comment>
<comment type="subunit">
    <text evidence="1">F-type ATPases have 2 components, F(1) - the catalytic core - and F(0) - the membrane proton channel. F(1) has five subunits: alpha(3), beta(3), gamma(1), delta(1), epsilon(1). F(0) has three main subunits: a(1), b(2) and c(10-14). The alpha and beta chains form an alternating ring which encloses part of the gamma chain. F(1) is attached to F(0) by a central stalk formed by the gamma and epsilon chains, while a peripheral stalk is formed by the delta and b chains.</text>
</comment>
<comment type="subcellular location">
    <subcellularLocation>
        <location evidence="1">Cell inner membrane</location>
        <topology evidence="1">Multi-pass membrane protein</topology>
    </subcellularLocation>
</comment>
<comment type="similarity">
    <text evidence="1">Belongs to the ATPase C chain family.</text>
</comment>
<accession>A3M139</accession>
<sequence>MELTLGLVAIASAILIAFGALGTAIGFGLLGGRFLEAVARQPELAPQLQTRMFLIAGLLDAVPMIGVGIGLFFIFANPFVG</sequence>
<dbReference type="EMBL" id="CP000521">
    <property type="protein sequence ID" value="ABO10633.2"/>
    <property type="molecule type" value="Genomic_DNA"/>
</dbReference>
<dbReference type="RefSeq" id="WP_000424060.1">
    <property type="nucleotide sequence ID" value="NZ_CP053098.1"/>
</dbReference>
<dbReference type="PDB" id="7P2Y">
    <property type="method" value="EM"/>
    <property type="resolution" value="3.10 A"/>
    <property type="chains" value="G/H/J/K/L/O/P/Q/R/S=1-81"/>
</dbReference>
<dbReference type="PDB" id="7P3N">
    <property type="method" value="EM"/>
    <property type="resolution" value="4.60 A"/>
    <property type="chains" value="G/H/J/K/L/O/P/Q/R/S=1-81"/>
</dbReference>
<dbReference type="PDB" id="7P3W">
    <property type="method" value="EM"/>
    <property type="resolution" value="4.30 A"/>
    <property type="chains" value="G/H/J/K/L/O/P/Q/R/S=1-81"/>
</dbReference>
<dbReference type="PDBsum" id="7P2Y"/>
<dbReference type="PDBsum" id="7P3N"/>
<dbReference type="PDBsum" id="7P3W"/>
<dbReference type="EMDB" id="EMD-13174"/>
<dbReference type="EMDB" id="EMD-13181"/>
<dbReference type="EMDB" id="EMD-13186"/>
<dbReference type="SMR" id="A3M139"/>
<dbReference type="GeneID" id="97424931"/>
<dbReference type="KEGG" id="acb:A1S_0150"/>
<dbReference type="HOGENOM" id="CLU_148047_1_0_6"/>
<dbReference type="GO" id="GO:0005886">
    <property type="term" value="C:plasma membrane"/>
    <property type="evidence" value="ECO:0007669"/>
    <property type="project" value="UniProtKB-SubCell"/>
</dbReference>
<dbReference type="GO" id="GO:0045259">
    <property type="term" value="C:proton-transporting ATP synthase complex"/>
    <property type="evidence" value="ECO:0007669"/>
    <property type="project" value="UniProtKB-KW"/>
</dbReference>
<dbReference type="GO" id="GO:0033177">
    <property type="term" value="C:proton-transporting two-sector ATPase complex, proton-transporting domain"/>
    <property type="evidence" value="ECO:0007669"/>
    <property type="project" value="InterPro"/>
</dbReference>
<dbReference type="GO" id="GO:0008289">
    <property type="term" value="F:lipid binding"/>
    <property type="evidence" value="ECO:0007669"/>
    <property type="project" value="UniProtKB-KW"/>
</dbReference>
<dbReference type="GO" id="GO:0046933">
    <property type="term" value="F:proton-transporting ATP synthase activity, rotational mechanism"/>
    <property type="evidence" value="ECO:0007669"/>
    <property type="project" value="UniProtKB-UniRule"/>
</dbReference>
<dbReference type="CDD" id="cd18185">
    <property type="entry name" value="ATP-synt_Fo_c_ATPE"/>
    <property type="match status" value="1"/>
</dbReference>
<dbReference type="FunFam" id="1.20.20.10:FF:000002">
    <property type="entry name" value="ATP synthase subunit c"/>
    <property type="match status" value="1"/>
</dbReference>
<dbReference type="Gene3D" id="1.20.20.10">
    <property type="entry name" value="F1F0 ATP synthase subunit C"/>
    <property type="match status" value="1"/>
</dbReference>
<dbReference type="HAMAP" id="MF_01396">
    <property type="entry name" value="ATP_synth_c_bact"/>
    <property type="match status" value="1"/>
</dbReference>
<dbReference type="InterPro" id="IPR005953">
    <property type="entry name" value="ATP_synth_csu_bac/chlpt"/>
</dbReference>
<dbReference type="InterPro" id="IPR000454">
    <property type="entry name" value="ATP_synth_F0_csu"/>
</dbReference>
<dbReference type="InterPro" id="IPR020537">
    <property type="entry name" value="ATP_synth_F0_csu_DDCD_BS"/>
</dbReference>
<dbReference type="InterPro" id="IPR038662">
    <property type="entry name" value="ATP_synth_F0_csu_sf"/>
</dbReference>
<dbReference type="InterPro" id="IPR002379">
    <property type="entry name" value="ATPase_proteolipid_c-like_dom"/>
</dbReference>
<dbReference type="InterPro" id="IPR035921">
    <property type="entry name" value="F/V-ATP_Csub_sf"/>
</dbReference>
<dbReference type="NCBIfam" id="TIGR01260">
    <property type="entry name" value="ATP_synt_c"/>
    <property type="match status" value="1"/>
</dbReference>
<dbReference type="NCBIfam" id="NF005363">
    <property type="entry name" value="PRK06876.1"/>
    <property type="match status" value="1"/>
</dbReference>
<dbReference type="Pfam" id="PF00137">
    <property type="entry name" value="ATP-synt_C"/>
    <property type="match status" value="1"/>
</dbReference>
<dbReference type="PRINTS" id="PR00124">
    <property type="entry name" value="ATPASEC"/>
</dbReference>
<dbReference type="SUPFAM" id="SSF81333">
    <property type="entry name" value="F1F0 ATP synthase subunit C"/>
    <property type="match status" value="1"/>
</dbReference>
<dbReference type="PROSITE" id="PS00605">
    <property type="entry name" value="ATPASE_C"/>
    <property type="match status" value="1"/>
</dbReference>
<organism>
    <name type="scientific">Acinetobacter baumannii (strain ATCC 17978 / DSM 105126 / CIP 53.77 / LMG 1025 / NCDC KC755 / 5377)</name>
    <dbReference type="NCBI Taxonomy" id="400667"/>
    <lineage>
        <taxon>Bacteria</taxon>
        <taxon>Pseudomonadati</taxon>
        <taxon>Pseudomonadota</taxon>
        <taxon>Gammaproteobacteria</taxon>
        <taxon>Moraxellales</taxon>
        <taxon>Moraxellaceae</taxon>
        <taxon>Acinetobacter</taxon>
        <taxon>Acinetobacter calcoaceticus/baumannii complex</taxon>
    </lineage>
</organism>
<keyword id="KW-0002">3D-structure</keyword>
<keyword id="KW-0066">ATP synthesis</keyword>
<keyword id="KW-0997">Cell inner membrane</keyword>
<keyword id="KW-1003">Cell membrane</keyword>
<keyword id="KW-0138">CF(0)</keyword>
<keyword id="KW-0375">Hydrogen ion transport</keyword>
<keyword id="KW-0406">Ion transport</keyword>
<keyword id="KW-0446">Lipid-binding</keyword>
<keyword id="KW-0472">Membrane</keyword>
<keyword id="KW-0812">Transmembrane</keyword>
<keyword id="KW-1133">Transmembrane helix</keyword>
<keyword id="KW-0813">Transport</keyword>
<evidence type="ECO:0000255" key="1">
    <source>
        <dbReference type="HAMAP-Rule" id="MF_01396"/>
    </source>
</evidence>
<evidence type="ECO:0007829" key="2">
    <source>
        <dbReference type="PDB" id="7P2Y"/>
    </source>
</evidence>